<name>SSRP_RICPR</name>
<dbReference type="EMBL" id="Y11777">
    <property type="protein sequence ID" value="CAA72448.1"/>
    <property type="molecule type" value="Genomic_DNA"/>
</dbReference>
<dbReference type="EMBL" id="AJ235271">
    <property type="protein sequence ID" value="CAA14887.1"/>
    <property type="molecule type" value="Genomic_DNA"/>
</dbReference>
<dbReference type="PIR" id="E71701">
    <property type="entry name" value="E71701"/>
</dbReference>
<dbReference type="RefSeq" id="NP_220811.1">
    <property type="nucleotide sequence ID" value="NC_000963.1"/>
</dbReference>
<dbReference type="RefSeq" id="WP_004599469.1">
    <property type="nucleotide sequence ID" value="NC_000963.1"/>
</dbReference>
<dbReference type="SMR" id="O05968"/>
<dbReference type="STRING" id="272947.gene:17555510"/>
<dbReference type="EnsemblBacteria" id="CAA14887">
    <property type="protein sequence ID" value="CAA14887"/>
    <property type="gene ID" value="CAA14887"/>
</dbReference>
<dbReference type="GeneID" id="57569555"/>
<dbReference type="KEGG" id="rpr:RP430"/>
<dbReference type="PATRIC" id="fig|272947.5.peg.443"/>
<dbReference type="eggNOG" id="COG0691">
    <property type="taxonomic scope" value="Bacteria"/>
</dbReference>
<dbReference type="HOGENOM" id="CLU_108953_0_0_5"/>
<dbReference type="OrthoDB" id="9805462at2"/>
<dbReference type="Proteomes" id="UP000002480">
    <property type="component" value="Chromosome"/>
</dbReference>
<dbReference type="GO" id="GO:0005829">
    <property type="term" value="C:cytosol"/>
    <property type="evidence" value="ECO:0007669"/>
    <property type="project" value="TreeGrafter"/>
</dbReference>
<dbReference type="GO" id="GO:0003723">
    <property type="term" value="F:RNA binding"/>
    <property type="evidence" value="ECO:0007669"/>
    <property type="project" value="UniProtKB-UniRule"/>
</dbReference>
<dbReference type="GO" id="GO:0070929">
    <property type="term" value="P:trans-translation"/>
    <property type="evidence" value="ECO:0007669"/>
    <property type="project" value="UniProtKB-UniRule"/>
</dbReference>
<dbReference type="CDD" id="cd09294">
    <property type="entry name" value="SmpB"/>
    <property type="match status" value="1"/>
</dbReference>
<dbReference type="Gene3D" id="2.40.280.10">
    <property type="match status" value="1"/>
</dbReference>
<dbReference type="HAMAP" id="MF_00023">
    <property type="entry name" value="SmpB"/>
    <property type="match status" value="1"/>
</dbReference>
<dbReference type="InterPro" id="IPR023620">
    <property type="entry name" value="SmpB"/>
</dbReference>
<dbReference type="InterPro" id="IPR000037">
    <property type="entry name" value="SsrA-bd_prot"/>
</dbReference>
<dbReference type="InterPro" id="IPR020081">
    <property type="entry name" value="SsrA-bd_prot_CS"/>
</dbReference>
<dbReference type="NCBIfam" id="NF003843">
    <property type="entry name" value="PRK05422.1"/>
    <property type="match status" value="1"/>
</dbReference>
<dbReference type="NCBIfam" id="TIGR00086">
    <property type="entry name" value="smpB"/>
    <property type="match status" value="1"/>
</dbReference>
<dbReference type="PANTHER" id="PTHR30308:SF2">
    <property type="entry name" value="SSRA-BINDING PROTEIN"/>
    <property type="match status" value="1"/>
</dbReference>
<dbReference type="PANTHER" id="PTHR30308">
    <property type="entry name" value="TMRNA-BINDING COMPONENT OF TRANS-TRANSLATION TAGGING COMPLEX"/>
    <property type="match status" value="1"/>
</dbReference>
<dbReference type="Pfam" id="PF01668">
    <property type="entry name" value="SmpB"/>
    <property type="match status" value="1"/>
</dbReference>
<dbReference type="SUPFAM" id="SSF74982">
    <property type="entry name" value="Small protein B (SmpB)"/>
    <property type="match status" value="1"/>
</dbReference>
<dbReference type="PROSITE" id="PS01317">
    <property type="entry name" value="SSRP"/>
    <property type="match status" value="1"/>
</dbReference>
<keyword id="KW-0963">Cytoplasm</keyword>
<keyword id="KW-1185">Reference proteome</keyword>
<keyword id="KW-0694">RNA-binding</keyword>
<reference key="1">
    <citation type="journal article" date="1997" name="Microbiology">
        <title>Genomic rearrangements during evolution of the obligate intracellular parasite Rickettsia prowazekii as inferred from an analysis of 52015 bp nucleotide sequence.</title>
        <authorList>
            <person name="Andersson J.O."/>
            <person name="Andersson S.G.E."/>
        </authorList>
    </citation>
    <scope>NUCLEOTIDE SEQUENCE [GENOMIC DNA]</scope>
    <source>
        <strain>Madrid E</strain>
    </source>
</reference>
<reference key="2">
    <citation type="journal article" date="1998" name="Nature">
        <title>The genome sequence of Rickettsia prowazekii and the origin of mitochondria.</title>
        <authorList>
            <person name="Andersson S.G.E."/>
            <person name="Zomorodipour A."/>
            <person name="Andersson J.O."/>
            <person name="Sicheritz-Ponten T."/>
            <person name="Alsmark U.C.M."/>
            <person name="Podowski R.M."/>
            <person name="Naeslund A.K."/>
            <person name="Eriksson A.-S."/>
            <person name="Winkler H.H."/>
            <person name="Kurland C.G."/>
        </authorList>
    </citation>
    <scope>NUCLEOTIDE SEQUENCE [LARGE SCALE GENOMIC DNA]</scope>
    <source>
        <strain>Madrid E</strain>
    </source>
</reference>
<organism>
    <name type="scientific">Rickettsia prowazekii (strain Madrid E)</name>
    <dbReference type="NCBI Taxonomy" id="272947"/>
    <lineage>
        <taxon>Bacteria</taxon>
        <taxon>Pseudomonadati</taxon>
        <taxon>Pseudomonadota</taxon>
        <taxon>Alphaproteobacteria</taxon>
        <taxon>Rickettsiales</taxon>
        <taxon>Rickettsiaceae</taxon>
        <taxon>Rickettsieae</taxon>
        <taxon>Rickettsia</taxon>
        <taxon>typhus group</taxon>
    </lineage>
</organism>
<accession>O05968</accession>
<feature type="chain" id="PRO_0000103018" description="SsrA-binding protein">
    <location>
        <begin position="1"/>
        <end position="152"/>
    </location>
</feature>
<sequence length="152" mass="17770">MIEDKKVIVQNKKALFNYFIEEILEAGIVLKGSEVQSLRQGKASIEESHASDNGHEVFLYNCHITEYEKANRFNHSTRRPRKLLLHAKEIKKIIGRIRIKGYTLVALSMYFNKKNKVKVELGIAKGKKLYDKRAAIKEKDWKKDQSRLIRQK</sequence>
<gene>
    <name evidence="1" type="primary">smpB</name>
    <name type="ordered locus">RP430</name>
</gene>
<evidence type="ECO:0000255" key="1">
    <source>
        <dbReference type="HAMAP-Rule" id="MF_00023"/>
    </source>
</evidence>
<evidence type="ECO:0000305" key="2"/>
<protein>
    <recommendedName>
        <fullName evidence="1">SsrA-binding protein</fullName>
    </recommendedName>
    <alternativeName>
        <fullName evidence="1">Small protein B</fullName>
    </alternativeName>
</protein>
<proteinExistence type="inferred from homology"/>
<comment type="function">
    <text evidence="1">Required for rescue of stalled ribosomes mediated by trans-translation. Binds to transfer-messenger RNA (tmRNA), required for stable association of tmRNA with ribosomes. tmRNA and SmpB together mimic tRNA shape, replacing the anticodon stem-loop with SmpB. tmRNA is encoded by the ssrA gene; the 2 termini fold to resemble tRNA(Ala) and it encodes a 'tag peptide', a short internal open reading frame. During trans-translation Ala-aminoacylated tmRNA acts like a tRNA, entering the A-site of stalled ribosomes, displacing the stalled mRNA. The ribosome then switches to translate the ORF on the tmRNA; the nascent peptide is terminated with the 'tag peptide' encoded by the tmRNA and targeted for degradation. The ribosome is freed to recommence translation, which seems to be the essential function of trans-translation.</text>
</comment>
<comment type="subcellular location">
    <subcellularLocation>
        <location evidence="1">Cytoplasm</location>
    </subcellularLocation>
    <text evidence="1">The tmRNA-SmpB complex associates with stalled 70S ribosomes.</text>
</comment>
<comment type="similarity">
    <text evidence="1">Belongs to the SmpB family.</text>
</comment>
<comment type="caution">
    <text evidence="2">SsrA has yet not been found in R.prowazekii, so the function of this protein is not obvious.</text>
</comment>